<protein>
    <recommendedName>
        <fullName>Inner membrane transporter YgjI</fullName>
    </recommendedName>
</protein>
<accession>P42590</accession>
<accession>Q2M9C8</accession>
<accession>Q6BF49</accession>
<dbReference type="EMBL" id="U18997">
    <property type="protein sequence ID" value="AAA57879.1"/>
    <property type="molecule type" value="Genomic_DNA"/>
</dbReference>
<dbReference type="EMBL" id="U00096">
    <property type="protein sequence ID" value="AAT48165.1"/>
    <property type="molecule type" value="Genomic_DNA"/>
</dbReference>
<dbReference type="EMBL" id="AP009048">
    <property type="protein sequence ID" value="BAE77128.1"/>
    <property type="molecule type" value="Genomic_DNA"/>
</dbReference>
<dbReference type="PIR" id="C65096">
    <property type="entry name" value="C65096"/>
</dbReference>
<dbReference type="RefSeq" id="WP_001285432.1">
    <property type="nucleotide sequence ID" value="NZ_LN832404.1"/>
</dbReference>
<dbReference type="RefSeq" id="YP_026200.1">
    <property type="nucleotide sequence ID" value="NC_000913.3"/>
</dbReference>
<dbReference type="SMR" id="P42590"/>
<dbReference type="BioGRID" id="4261469">
    <property type="interactions" value="126"/>
</dbReference>
<dbReference type="DIP" id="DIP-12235N"/>
<dbReference type="FunCoup" id="P42590">
    <property type="interactions" value="195"/>
</dbReference>
<dbReference type="IntAct" id="P42590">
    <property type="interactions" value="1"/>
</dbReference>
<dbReference type="STRING" id="511145.b3078"/>
<dbReference type="TCDB" id="2.A.3.7.4">
    <property type="family name" value="the amino acid-polyamine-organocation (apc) family"/>
</dbReference>
<dbReference type="PaxDb" id="511145-b3078"/>
<dbReference type="EnsemblBacteria" id="AAT48165">
    <property type="protein sequence ID" value="AAT48165"/>
    <property type="gene ID" value="b3078"/>
</dbReference>
<dbReference type="GeneID" id="947579"/>
<dbReference type="KEGG" id="ecj:JW5512"/>
<dbReference type="KEGG" id="eco:b3078"/>
<dbReference type="KEGG" id="ecoc:C3026_16810"/>
<dbReference type="PATRIC" id="fig|1411691.4.peg.3652"/>
<dbReference type="EchoBASE" id="EB2579"/>
<dbReference type="eggNOG" id="COG0531">
    <property type="taxonomic scope" value="Bacteria"/>
</dbReference>
<dbReference type="HOGENOM" id="CLU_020854_2_1_6"/>
<dbReference type="InParanoid" id="P42590"/>
<dbReference type="OMA" id="DIMTIIF"/>
<dbReference type="OrthoDB" id="8766814at2"/>
<dbReference type="PhylomeDB" id="P42590"/>
<dbReference type="BioCyc" id="EcoCyc:YGJI-MONOMER"/>
<dbReference type="PRO" id="PR:P42590"/>
<dbReference type="Proteomes" id="UP000000625">
    <property type="component" value="Chromosome"/>
</dbReference>
<dbReference type="GO" id="GO:0005886">
    <property type="term" value="C:plasma membrane"/>
    <property type="evidence" value="ECO:0000314"/>
    <property type="project" value="EcoCyc"/>
</dbReference>
<dbReference type="GO" id="GO:0022857">
    <property type="term" value="F:transmembrane transporter activity"/>
    <property type="evidence" value="ECO:0007669"/>
    <property type="project" value="InterPro"/>
</dbReference>
<dbReference type="FunFam" id="1.20.1740.10:FF:000023">
    <property type="entry name" value="Amino acid permease"/>
    <property type="match status" value="1"/>
</dbReference>
<dbReference type="Gene3D" id="1.20.1740.10">
    <property type="entry name" value="Amino acid/polyamine transporter I"/>
    <property type="match status" value="1"/>
</dbReference>
<dbReference type="InterPro" id="IPR002293">
    <property type="entry name" value="AA/rel_permease1"/>
</dbReference>
<dbReference type="InterPro" id="IPR050367">
    <property type="entry name" value="APC_superfamily"/>
</dbReference>
<dbReference type="PANTHER" id="PTHR42770">
    <property type="entry name" value="AMINO ACID TRANSPORTER-RELATED"/>
    <property type="match status" value="1"/>
</dbReference>
<dbReference type="PANTHER" id="PTHR42770:SF15">
    <property type="entry name" value="GLUTAMATE_GAMMA-AMINOBUTYRATE ANTIPORTER-RELATED"/>
    <property type="match status" value="1"/>
</dbReference>
<dbReference type="Pfam" id="PF13520">
    <property type="entry name" value="AA_permease_2"/>
    <property type="match status" value="1"/>
</dbReference>
<dbReference type="PIRSF" id="PIRSF006060">
    <property type="entry name" value="AA_transporter"/>
    <property type="match status" value="1"/>
</dbReference>
<reference key="1">
    <citation type="journal article" date="1997" name="Science">
        <title>The complete genome sequence of Escherichia coli K-12.</title>
        <authorList>
            <person name="Blattner F.R."/>
            <person name="Plunkett G. III"/>
            <person name="Bloch C.A."/>
            <person name="Perna N.T."/>
            <person name="Burland V."/>
            <person name="Riley M."/>
            <person name="Collado-Vides J."/>
            <person name="Glasner J.D."/>
            <person name="Rode C.K."/>
            <person name="Mayhew G.F."/>
            <person name="Gregor J."/>
            <person name="Davis N.W."/>
            <person name="Kirkpatrick H.A."/>
            <person name="Goeden M.A."/>
            <person name="Rose D.J."/>
            <person name="Mau B."/>
            <person name="Shao Y."/>
        </authorList>
    </citation>
    <scope>NUCLEOTIDE SEQUENCE [LARGE SCALE GENOMIC DNA]</scope>
    <source>
        <strain>K12 / MG1655 / ATCC 47076</strain>
    </source>
</reference>
<reference key="2">
    <citation type="journal article" date="2006" name="Nucleic Acids Res.">
        <title>Escherichia coli K-12: a cooperatively developed annotation snapshot -- 2005.</title>
        <authorList>
            <person name="Riley M."/>
            <person name="Abe T."/>
            <person name="Arnaud M.B."/>
            <person name="Berlyn M.K.B."/>
            <person name="Blattner F.R."/>
            <person name="Chaudhuri R.R."/>
            <person name="Glasner J.D."/>
            <person name="Horiuchi T."/>
            <person name="Keseler I.M."/>
            <person name="Kosuge T."/>
            <person name="Mori H."/>
            <person name="Perna N.T."/>
            <person name="Plunkett G. III"/>
            <person name="Rudd K.E."/>
            <person name="Serres M.H."/>
            <person name="Thomas G.H."/>
            <person name="Thomson N.R."/>
            <person name="Wishart D."/>
            <person name="Wanner B.L."/>
        </authorList>
    </citation>
    <scope>SEQUENCE REVISION TO 336-350</scope>
</reference>
<reference key="3">
    <citation type="journal article" date="2006" name="Mol. Syst. Biol.">
        <title>Highly accurate genome sequences of Escherichia coli K-12 strains MG1655 and W3110.</title>
        <authorList>
            <person name="Hayashi K."/>
            <person name="Morooka N."/>
            <person name="Yamamoto Y."/>
            <person name="Fujita K."/>
            <person name="Isono K."/>
            <person name="Choi S."/>
            <person name="Ohtsubo E."/>
            <person name="Baba T."/>
            <person name="Wanner B.L."/>
            <person name="Mori H."/>
            <person name="Horiuchi T."/>
        </authorList>
    </citation>
    <scope>NUCLEOTIDE SEQUENCE [LARGE SCALE GENOMIC DNA]</scope>
    <source>
        <strain>K12 / W3110 / ATCC 27325 / DSM 5911</strain>
    </source>
</reference>
<reference key="4">
    <citation type="journal article" date="2005" name="Science">
        <title>Global topology analysis of the Escherichia coli inner membrane proteome.</title>
        <authorList>
            <person name="Daley D.O."/>
            <person name="Rapp M."/>
            <person name="Granseth E."/>
            <person name="Melen K."/>
            <person name="Drew D."/>
            <person name="von Heijne G."/>
        </authorList>
    </citation>
    <scope>TOPOLOGY [LARGE SCALE ANALYSIS]</scope>
    <source>
        <strain>K12 / MG1655 / ATCC 47076</strain>
    </source>
</reference>
<organism>
    <name type="scientific">Escherichia coli (strain K12)</name>
    <dbReference type="NCBI Taxonomy" id="83333"/>
    <lineage>
        <taxon>Bacteria</taxon>
        <taxon>Pseudomonadati</taxon>
        <taxon>Pseudomonadota</taxon>
        <taxon>Gammaproteobacteria</taxon>
        <taxon>Enterobacterales</taxon>
        <taxon>Enterobacteriaceae</taxon>
        <taxon>Escherichia</taxon>
    </lineage>
</organism>
<keyword id="KW-0997">Cell inner membrane</keyword>
<keyword id="KW-1003">Cell membrane</keyword>
<keyword id="KW-0472">Membrane</keyword>
<keyword id="KW-1185">Reference proteome</keyword>
<keyword id="KW-0812">Transmembrane</keyword>
<keyword id="KW-1133">Transmembrane helix</keyword>
<keyword id="KW-0813">Transport</keyword>
<sequence>MSDTKRNTIGKFGLLSLTFAAVYSFNNVINNNIELGLASAPMFFLATIFYFIPFCLIIAEFVSLNKNSEAGVYAWVKSSLGGRWAFITAYTYWFVNLFFFTSLLPRVIAYASYAFLGYEYIMTPVATTIISMVLFAFSTWVSTNGAKMLGPITSVTSTLMLLLTLSYILLAGTALVGGVQPADAITVDAMIPNFNWAFLGVTTWIFMAAGGAESVAVYVNDVKGGSKSFVKVIILAGIFIGVLYSVSSVLINVFVSSKELKFTGGSVQVFHGMAAYFGLPEALMNRFVGLVSFTAMFGSLLMWTATPVKIFFSEIPEGIFGKKTVELNENGVPARAAWIQFLIVIPLMIIPMLGSNTVQDLMNTIINMTAAASMLPPLFIMLAYLNLRAKLDHLPRDFRMGSRRTGIIVVSMLIAIFAVGFVASTFPTGANILTIIFYNVGGIVIFLGFAWWKYSKYIKGLTAEERHIEATPASNVD</sequence>
<name>YGJI_ECOLI</name>
<proteinExistence type="evidence at protein level"/>
<feature type="chain" id="PRO_0000213045" description="Inner membrane transporter YgjI">
    <location>
        <begin position="1"/>
        <end position="477"/>
    </location>
</feature>
<feature type="topological domain" description="Periplasmic" evidence="1">
    <location>
        <begin position="1"/>
        <end position="8"/>
    </location>
</feature>
<feature type="transmembrane region" description="Helical" evidence="1">
    <location>
        <begin position="9"/>
        <end position="29"/>
    </location>
</feature>
<feature type="topological domain" description="Cytoplasmic" evidence="1">
    <location>
        <begin position="30"/>
        <end position="41"/>
    </location>
</feature>
<feature type="transmembrane region" description="Helical" evidence="1">
    <location>
        <begin position="42"/>
        <end position="62"/>
    </location>
</feature>
<feature type="topological domain" description="Periplasmic" evidence="1">
    <location>
        <begin position="63"/>
        <end position="83"/>
    </location>
</feature>
<feature type="transmembrane region" description="Helical" evidence="1">
    <location>
        <begin position="84"/>
        <end position="104"/>
    </location>
</feature>
<feature type="topological domain" description="Cytoplasmic" evidence="1">
    <location>
        <begin position="105"/>
        <end position="120"/>
    </location>
</feature>
<feature type="transmembrane region" description="Helical" evidence="1">
    <location>
        <begin position="121"/>
        <end position="141"/>
    </location>
</feature>
<feature type="topological domain" description="Periplasmic" evidence="1">
    <location>
        <begin position="142"/>
        <end position="158"/>
    </location>
</feature>
<feature type="transmembrane region" description="Helical" evidence="1">
    <location>
        <begin position="159"/>
        <end position="179"/>
    </location>
</feature>
<feature type="topological domain" description="Cytoplasmic" evidence="1">
    <location>
        <begin position="180"/>
        <end position="196"/>
    </location>
</feature>
<feature type="transmembrane region" description="Helical" evidence="1">
    <location>
        <begin position="197"/>
        <end position="217"/>
    </location>
</feature>
<feature type="topological domain" description="Periplasmic" evidence="1">
    <location>
        <begin position="218"/>
        <end position="232"/>
    </location>
</feature>
<feature type="transmembrane region" description="Helical" evidence="1">
    <location>
        <begin position="233"/>
        <end position="253"/>
    </location>
</feature>
<feature type="topological domain" description="Cytoplasmic" evidence="1">
    <location>
        <begin position="254"/>
        <end position="263"/>
    </location>
</feature>
<feature type="transmembrane region" description="Helical" evidence="1">
    <location>
        <begin position="264"/>
        <end position="284"/>
    </location>
</feature>
<feature type="topological domain" description="Periplasmic" evidence="1">
    <location>
        <begin position="285"/>
        <end position="286"/>
    </location>
</feature>
<feature type="transmembrane region" description="Helical" evidence="1">
    <location>
        <begin position="287"/>
        <end position="307"/>
    </location>
</feature>
<feature type="topological domain" description="Cytoplasmic" evidence="1">
    <location>
        <begin position="308"/>
        <end position="335"/>
    </location>
</feature>
<feature type="transmembrane region" description="Helical" evidence="1">
    <location>
        <begin position="336"/>
        <end position="356"/>
    </location>
</feature>
<feature type="topological domain" description="Periplasmic" evidence="1">
    <location>
        <begin position="357"/>
        <end position="364"/>
    </location>
</feature>
<feature type="transmembrane region" description="Helical" evidence="1">
    <location>
        <begin position="365"/>
        <end position="385"/>
    </location>
</feature>
<feature type="topological domain" description="Cytoplasmic" evidence="1">
    <location>
        <begin position="386"/>
        <end position="405"/>
    </location>
</feature>
<feature type="transmembrane region" description="Helical" evidence="1">
    <location>
        <begin position="406"/>
        <end position="426"/>
    </location>
</feature>
<feature type="topological domain" description="Periplasmic" evidence="1">
    <location>
        <begin position="427"/>
        <end position="431"/>
    </location>
</feature>
<feature type="transmembrane region" description="Helical" evidence="1">
    <location>
        <begin position="432"/>
        <end position="452"/>
    </location>
</feature>
<feature type="topological domain" description="Cytoplasmic" evidence="1">
    <location>
        <begin position="453"/>
        <end position="477"/>
    </location>
</feature>
<feature type="sequence conflict" description="In Ref. 1; AAA57879." evidence="2" ref="1">
    <original>AAWIQFLIVIPLMII</original>
    <variation>RSVDPVPDRHPADDY</variation>
    <location>
        <begin position="336"/>
        <end position="350"/>
    </location>
</feature>
<comment type="subcellular location">
    <subcellularLocation>
        <location>Cell inner membrane</location>
        <topology>Multi-pass membrane protein</topology>
    </subcellularLocation>
</comment>
<comment type="similarity">
    <text evidence="2">Belongs to the amino acid-polyamine-organocation (APC) superfamily.</text>
</comment>
<gene>
    <name type="primary">ygjI</name>
    <name type="ordered locus">b3078</name>
    <name type="ordered locus">JW5512</name>
</gene>
<evidence type="ECO:0000255" key="1"/>
<evidence type="ECO:0000305" key="2"/>